<keyword id="KW-0963">Cytoplasm</keyword>
<keyword id="KW-0342">GTP-binding</keyword>
<keyword id="KW-0436">Ligase</keyword>
<keyword id="KW-0460">Magnesium</keyword>
<keyword id="KW-0479">Metal-binding</keyword>
<keyword id="KW-0547">Nucleotide-binding</keyword>
<keyword id="KW-0658">Purine biosynthesis</keyword>
<keyword id="KW-1185">Reference proteome</keyword>
<protein>
    <recommendedName>
        <fullName evidence="1">Adenylosuccinate synthetase</fullName>
        <shortName evidence="1">AMPSase</shortName>
        <shortName evidence="1">AdSS</shortName>
        <ecNumber evidence="1">6.3.4.4</ecNumber>
    </recommendedName>
    <alternativeName>
        <fullName evidence="1">IMP--aspartate ligase</fullName>
    </alternativeName>
</protein>
<feature type="chain" id="PRO_0000224253" description="Adenylosuccinate synthetase">
    <location>
        <begin position="1"/>
        <end position="430"/>
    </location>
</feature>
<feature type="active site" description="Proton acceptor" evidence="1">
    <location>
        <position position="13"/>
    </location>
</feature>
<feature type="active site" description="Proton donor" evidence="1">
    <location>
        <position position="41"/>
    </location>
</feature>
<feature type="binding site" evidence="1">
    <location>
        <begin position="12"/>
        <end position="18"/>
    </location>
    <ligand>
        <name>GTP</name>
        <dbReference type="ChEBI" id="CHEBI:37565"/>
    </ligand>
</feature>
<feature type="binding site" description="in other chain" evidence="1">
    <location>
        <begin position="13"/>
        <end position="16"/>
    </location>
    <ligand>
        <name>IMP</name>
        <dbReference type="ChEBI" id="CHEBI:58053"/>
        <note>ligand shared between dimeric partners</note>
    </ligand>
</feature>
<feature type="binding site" evidence="1">
    <location>
        <position position="13"/>
    </location>
    <ligand>
        <name>Mg(2+)</name>
        <dbReference type="ChEBI" id="CHEBI:18420"/>
    </ligand>
</feature>
<feature type="binding site" description="in other chain" evidence="1">
    <location>
        <begin position="38"/>
        <end position="41"/>
    </location>
    <ligand>
        <name>IMP</name>
        <dbReference type="ChEBI" id="CHEBI:58053"/>
        <note>ligand shared between dimeric partners</note>
    </ligand>
</feature>
<feature type="binding site" evidence="1">
    <location>
        <begin position="40"/>
        <end position="42"/>
    </location>
    <ligand>
        <name>GTP</name>
        <dbReference type="ChEBI" id="CHEBI:37565"/>
    </ligand>
</feature>
<feature type="binding site" evidence="1">
    <location>
        <position position="40"/>
    </location>
    <ligand>
        <name>Mg(2+)</name>
        <dbReference type="ChEBI" id="CHEBI:18420"/>
    </ligand>
</feature>
<feature type="binding site" description="in other chain" evidence="1">
    <location>
        <position position="128"/>
    </location>
    <ligand>
        <name>IMP</name>
        <dbReference type="ChEBI" id="CHEBI:58053"/>
        <note>ligand shared between dimeric partners</note>
    </ligand>
</feature>
<feature type="binding site" evidence="1">
    <location>
        <position position="142"/>
    </location>
    <ligand>
        <name>IMP</name>
        <dbReference type="ChEBI" id="CHEBI:58053"/>
        <note>ligand shared between dimeric partners</note>
    </ligand>
</feature>
<feature type="binding site" description="in other chain" evidence="1">
    <location>
        <position position="223"/>
    </location>
    <ligand>
        <name>IMP</name>
        <dbReference type="ChEBI" id="CHEBI:58053"/>
        <note>ligand shared between dimeric partners</note>
    </ligand>
</feature>
<feature type="binding site" description="in other chain" evidence="1">
    <location>
        <position position="238"/>
    </location>
    <ligand>
        <name>IMP</name>
        <dbReference type="ChEBI" id="CHEBI:58053"/>
        <note>ligand shared between dimeric partners</note>
    </ligand>
</feature>
<feature type="binding site" evidence="1">
    <location>
        <begin position="298"/>
        <end position="304"/>
    </location>
    <ligand>
        <name>substrate</name>
    </ligand>
</feature>
<feature type="binding site" description="in other chain" evidence="1">
    <location>
        <position position="302"/>
    </location>
    <ligand>
        <name>IMP</name>
        <dbReference type="ChEBI" id="CHEBI:58053"/>
        <note>ligand shared between dimeric partners</note>
    </ligand>
</feature>
<feature type="binding site" evidence="1">
    <location>
        <position position="304"/>
    </location>
    <ligand>
        <name>GTP</name>
        <dbReference type="ChEBI" id="CHEBI:37565"/>
    </ligand>
</feature>
<feature type="binding site" evidence="1">
    <location>
        <begin position="330"/>
        <end position="332"/>
    </location>
    <ligand>
        <name>GTP</name>
        <dbReference type="ChEBI" id="CHEBI:37565"/>
    </ligand>
</feature>
<feature type="binding site" evidence="1">
    <location>
        <begin position="412"/>
        <end position="414"/>
    </location>
    <ligand>
        <name>GTP</name>
        <dbReference type="ChEBI" id="CHEBI:37565"/>
    </ligand>
</feature>
<accession>Q65CR5</accession>
<accession>Q62N92</accession>
<sequence>MSSVVVVGTQWGDEGKGKITDFLSENAEVIARYQGGNNAGHTIKFNGVTYKLHLIPSGIFYKDKTCVIGNGMVVDPKALVTELAYLHERNVSTDNLRISNRAHVILPYHLKLDAVEEERKGANKIGTTKKGIGPAYMDKAARVGIRIADLLDRDVFEEKLARNLEEKNRLLEKMYDAEGFKIEDILDEYYEYGQQIKQYVCDTSVVLNDALDDGRRVLFEGAQGVMLDIDQGTYPFVTSSNPVAGGVTIGSGVGPTKIQHVVGVSKAYTTRVGDGPFPTELNNEIGDQIREVGREYGTTTGRPRRVGWFDSVVVRHARRVSGITDLSLNSIDVLTGIETLKICVAYKYRGEILEEFPASLKALAECEPVYEEMPGWTEDITGAKSLSDLPENARHYLERVSQLTGIPLSIFSVGPDRSQTNVVRSVYRPN</sequence>
<name>PURA_BACLD</name>
<reference key="1">
    <citation type="journal article" date="2004" name="J. Mol. Microbiol. Biotechnol.">
        <title>The complete genome sequence of Bacillus licheniformis DSM13, an organism with great industrial potential.</title>
        <authorList>
            <person name="Veith B."/>
            <person name="Herzberg C."/>
            <person name="Steckel S."/>
            <person name="Feesche J."/>
            <person name="Maurer K.H."/>
            <person name="Ehrenreich P."/>
            <person name="Baeumer S."/>
            <person name="Henne A."/>
            <person name="Liesegang H."/>
            <person name="Merkl R."/>
            <person name="Ehrenreich A."/>
            <person name="Gottschalk G."/>
        </authorList>
    </citation>
    <scope>NUCLEOTIDE SEQUENCE [LARGE SCALE GENOMIC DNA]</scope>
    <source>
        <strain>ATCC 14580 / DSM 13 / JCM 2505 / CCUG 7422 / NBRC 12200 / NCIMB 9375 / NCTC 10341 / NRRL NRS-1264 / Gibson 46</strain>
    </source>
</reference>
<reference key="2">
    <citation type="journal article" date="2004" name="Genome Biol.">
        <title>Complete genome sequence of the industrial bacterium Bacillus licheniformis and comparisons with closely related Bacillus species.</title>
        <authorList>
            <person name="Rey M.W."/>
            <person name="Ramaiya P."/>
            <person name="Nelson B.A."/>
            <person name="Brody-Karpin S.D."/>
            <person name="Zaretsky E.J."/>
            <person name="Tang M."/>
            <person name="Lopez de Leon A."/>
            <person name="Xiang H."/>
            <person name="Gusti V."/>
            <person name="Clausen I.G."/>
            <person name="Olsen P.B."/>
            <person name="Rasmussen M.D."/>
            <person name="Andersen J.T."/>
            <person name="Joergensen P.L."/>
            <person name="Larsen T.S."/>
            <person name="Sorokin A."/>
            <person name="Bolotin A."/>
            <person name="Lapidus A."/>
            <person name="Galleron N."/>
            <person name="Ehrlich S.D."/>
            <person name="Berka R.M."/>
        </authorList>
    </citation>
    <scope>NUCLEOTIDE SEQUENCE [LARGE SCALE GENOMIC DNA]</scope>
    <source>
        <strain>ATCC 14580 / DSM 13 / JCM 2505 / CCUG 7422 / NBRC 12200 / NCIMB 9375 / NCTC 10341 / NRRL NRS-1264 / Gibson 46</strain>
    </source>
</reference>
<comment type="function">
    <text evidence="1">Plays an important role in the de novo pathway of purine nucleotide biosynthesis. Catalyzes the first committed step in the biosynthesis of AMP from IMP.</text>
</comment>
<comment type="catalytic activity">
    <reaction evidence="1">
        <text>IMP + L-aspartate + GTP = N(6)-(1,2-dicarboxyethyl)-AMP + GDP + phosphate + 2 H(+)</text>
        <dbReference type="Rhea" id="RHEA:15753"/>
        <dbReference type="ChEBI" id="CHEBI:15378"/>
        <dbReference type="ChEBI" id="CHEBI:29991"/>
        <dbReference type="ChEBI" id="CHEBI:37565"/>
        <dbReference type="ChEBI" id="CHEBI:43474"/>
        <dbReference type="ChEBI" id="CHEBI:57567"/>
        <dbReference type="ChEBI" id="CHEBI:58053"/>
        <dbReference type="ChEBI" id="CHEBI:58189"/>
        <dbReference type="EC" id="6.3.4.4"/>
    </reaction>
</comment>
<comment type="cofactor">
    <cofactor evidence="1">
        <name>Mg(2+)</name>
        <dbReference type="ChEBI" id="CHEBI:18420"/>
    </cofactor>
    <text evidence="1">Binds 1 Mg(2+) ion per subunit.</text>
</comment>
<comment type="pathway">
    <text evidence="1">Purine metabolism; AMP biosynthesis via de novo pathway; AMP from IMP: step 1/2.</text>
</comment>
<comment type="subunit">
    <text evidence="1">Homodimer.</text>
</comment>
<comment type="subcellular location">
    <subcellularLocation>
        <location evidence="1">Cytoplasm</location>
    </subcellularLocation>
</comment>
<comment type="similarity">
    <text evidence="1">Belongs to the adenylosuccinate synthetase family.</text>
</comment>
<gene>
    <name evidence="1" type="primary">purA</name>
    <name type="ordered locus">BLi04341</name>
    <name type="ordered locus">BL03156</name>
</gene>
<proteinExistence type="inferred from homology"/>
<dbReference type="EC" id="6.3.4.4" evidence="1"/>
<dbReference type="EMBL" id="AE017333">
    <property type="protein sequence ID" value="AAU43149.1"/>
    <property type="molecule type" value="Genomic_DNA"/>
</dbReference>
<dbReference type="EMBL" id="CP000002">
    <property type="protein sequence ID" value="AAU25769.1"/>
    <property type="molecule type" value="Genomic_DNA"/>
</dbReference>
<dbReference type="RefSeq" id="WP_003177974.1">
    <property type="nucleotide sequence ID" value="NC_006322.1"/>
</dbReference>
<dbReference type="SMR" id="Q65CR5"/>
<dbReference type="STRING" id="279010.BL03156"/>
<dbReference type="KEGG" id="bld:BLi04341"/>
<dbReference type="KEGG" id="bli:BL03156"/>
<dbReference type="eggNOG" id="COG0104">
    <property type="taxonomic scope" value="Bacteria"/>
</dbReference>
<dbReference type="HOGENOM" id="CLU_029848_0_0_9"/>
<dbReference type="UniPathway" id="UPA00075">
    <property type="reaction ID" value="UER00335"/>
</dbReference>
<dbReference type="Proteomes" id="UP000000606">
    <property type="component" value="Chromosome"/>
</dbReference>
<dbReference type="GO" id="GO:0005737">
    <property type="term" value="C:cytoplasm"/>
    <property type="evidence" value="ECO:0007669"/>
    <property type="project" value="UniProtKB-SubCell"/>
</dbReference>
<dbReference type="GO" id="GO:0004019">
    <property type="term" value="F:adenylosuccinate synthase activity"/>
    <property type="evidence" value="ECO:0007669"/>
    <property type="project" value="UniProtKB-UniRule"/>
</dbReference>
<dbReference type="GO" id="GO:0005525">
    <property type="term" value="F:GTP binding"/>
    <property type="evidence" value="ECO:0007669"/>
    <property type="project" value="UniProtKB-UniRule"/>
</dbReference>
<dbReference type="GO" id="GO:0000287">
    <property type="term" value="F:magnesium ion binding"/>
    <property type="evidence" value="ECO:0007669"/>
    <property type="project" value="UniProtKB-UniRule"/>
</dbReference>
<dbReference type="GO" id="GO:0044208">
    <property type="term" value="P:'de novo' AMP biosynthetic process"/>
    <property type="evidence" value="ECO:0007669"/>
    <property type="project" value="UniProtKB-UniRule"/>
</dbReference>
<dbReference type="GO" id="GO:0046040">
    <property type="term" value="P:IMP metabolic process"/>
    <property type="evidence" value="ECO:0007669"/>
    <property type="project" value="TreeGrafter"/>
</dbReference>
<dbReference type="CDD" id="cd03108">
    <property type="entry name" value="AdSS"/>
    <property type="match status" value="1"/>
</dbReference>
<dbReference type="FunFam" id="1.10.300.10:FF:000001">
    <property type="entry name" value="Adenylosuccinate synthetase"/>
    <property type="match status" value="1"/>
</dbReference>
<dbReference type="FunFam" id="3.90.170.10:FF:000001">
    <property type="entry name" value="Adenylosuccinate synthetase"/>
    <property type="match status" value="1"/>
</dbReference>
<dbReference type="Gene3D" id="3.40.440.10">
    <property type="entry name" value="Adenylosuccinate Synthetase, subunit A, domain 1"/>
    <property type="match status" value="1"/>
</dbReference>
<dbReference type="Gene3D" id="1.10.300.10">
    <property type="entry name" value="Adenylosuccinate Synthetase, subunit A, domain 2"/>
    <property type="match status" value="1"/>
</dbReference>
<dbReference type="Gene3D" id="3.90.170.10">
    <property type="entry name" value="Adenylosuccinate Synthetase, subunit A, domain 3"/>
    <property type="match status" value="1"/>
</dbReference>
<dbReference type="HAMAP" id="MF_00011">
    <property type="entry name" value="Adenylosucc_synth"/>
    <property type="match status" value="1"/>
</dbReference>
<dbReference type="InterPro" id="IPR018220">
    <property type="entry name" value="Adenylosuccin_syn_GTP-bd"/>
</dbReference>
<dbReference type="InterPro" id="IPR033128">
    <property type="entry name" value="Adenylosuccin_syn_Lys_AS"/>
</dbReference>
<dbReference type="InterPro" id="IPR042109">
    <property type="entry name" value="Adenylosuccinate_synth_dom1"/>
</dbReference>
<dbReference type="InterPro" id="IPR042110">
    <property type="entry name" value="Adenylosuccinate_synth_dom2"/>
</dbReference>
<dbReference type="InterPro" id="IPR042111">
    <property type="entry name" value="Adenylosuccinate_synth_dom3"/>
</dbReference>
<dbReference type="InterPro" id="IPR001114">
    <property type="entry name" value="Adenylosuccinate_synthetase"/>
</dbReference>
<dbReference type="InterPro" id="IPR027417">
    <property type="entry name" value="P-loop_NTPase"/>
</dbReference>
<dbReference type="NCBIfam" id="NF002223">
    <property type="entry name" value="PRK01117.1"/>
    <property type="match status" value="1"/>
</dbReference>
<dbReference type="NCBIfam" id="TIGR00184">
    <property type="entry name" value="purA"/>
    <property type="match status" value="1"/>
</dbReference>
<dbReference type="PANTHER" id="PTHR11846">
    <property type="entry name" value="ADENYLOSUCCINATE SYNTHETASE"/>
    <property type="match status" value="1"/>
</dbReference>
<dbReference type="PANTHER" id="PTHR11846:SF0">
    <property type="entry name" value="ADENYLOSUCCINATE SYNTHETASE"/>
    <property type="match status" value="1"/>
</dbReference>
<dbReference type="Pfam" id="PF00709">
    <property type="entry name" value="Adenylsucc_synt"/>
    <property type="match status" value="1"/>
</dbReference>
<dbReference type="SMART" id="SM00788">
    <property type="entry name" value="Adenylsucc_synt"/>
    <property type="match status" value="1"/>
</dbReference>
<dbReference type="SUPFAM" id="SSF52540">
    <property type="entry name" value="P-loop containing nucleoside triphosphate hydrolases"/>
    <property type="match status" value="1"/>
</dbReference>
<dbReference type="PROSITE" id="PS01266">
    <property type="entry name" value="ADENYLOSUCCIN_SYN_1"/>
    <property type="match status" value="1"/>
</dbReference>
<dbReference type="PROSITE" id="PS00513">
    <property type="entry name" value="ADENYLOSUCCIN_SYN_2"/>
    <property type="match status" value="1"/>
</dbReference>
<organism>
    <name type="scientific">Bacillus licheniformis (strain ATCC 14580 / DSM 13 / JCM 2505 / CCUG 7422 / NBRC 12200 / NCIMB 9375 / NCTC 10341 / NRRL NRS-1264 / Gibson 46)</name>
    <dbReference type="NCBI Taxonomy" id="279010"/>
    <lineage>
        <taxon>Bacteria</taxon>
        <taxon>Bacillati</taxon>
        <taxon>Bacillota</taxon>
        <taxon>Bacilli</taxon>
        <taxon>Bacillales</taxon>
        <taxon>Bacillaceae</taxon>
        <taxon>Bacillus</taxon>
    </lineage>
</organism>
<evidence type="ECO:0000255" key="1">
    <source>
        <dbReference type="HAMAP-Rule" id="MF_00011"/>
    </source>
</evidence>